<dbReference type="EMBL" id="AE000516">
    <property type="protein sequence ID" value="AAK44963.1"/>
    <property type="molecule type" value="Genomic_DNA"/>
</dbReference>
<dbReference type="PIR" id="D70642">
    <property type="entry name" value="D70642"/>
</dbReference>
<dbReference type="RefSeq" id="WP_003403584.1">
    <property type="nucleotide sequence ID" value="NZ_KK341227.1"/>
</dbReference>
<dbReference type="SMR" id="P9WH44"/>
<dbReference type="GeneID" id="45424670"/>
<dbReference type="KEGG" id="mtc:MT0732"/>
<dbReference type="PATRIC" id="fig|83331.31.peg.782"/>
<dbReference type="HOGENOM" id="CLU_144911_0_1_11"/>
<dbReference type="Proteomes" id="UP000001020">
    <property type="component" value="Chromosome"/>
</dbReference>
<dbReference type="GO" id="GO:0005737">
    <property type="term" value="C:cytoplasm"/>
    <property type="evidence" value="ECO:0007669"/>
    <property type="project" value="UniProtKB-ARBA"/>
</dbReference>
<dbReference type="GO" id="GO:0015935">
    <property type="term" value="C:small ribosomal subunit"/>
    <property type="evidence" value="ECO:0007669"/>
    <property type="project" value="InterPro"/>
</dbReference>
<dbReference type="GO" id="GO:0019843">
    <property type="term" value="F:rRNA binding"/>
    <property type="evidence" value="ECO:0007669"/>
    <property type="project" value="UniProtKB-UniRule"/>
</dbReference>
<dbReference type="GO" id="GO:0003735">
    <property type="term" value="F:structural constituent of ribosome"/>
    <property type="evidence" value="ECO:0007669"/>
    <property type="project" value="InterPro"/>
</dbReference>
<dbReference type="GO" id="GO:0000028">
    <property type="term" value="P:ribosomal small subunit assembly"/>
    <property type="evidence" value="ECO:0007669"/>
    <property type="project" value="TreeGrafter"/>
</dbReference>
<dbReference type="GO" id="GO:0006412">
    <property type="term" value="P:translation"/>
    <property type="evidence" value="ECO:0007669"/>
    <property type="project" value="UniProtKB-UniRule"/>
</dbReference>
<dbReference type="FunFam" id="3.30.860.10:FF:000001">
    <property type="entry name" value="30S ribosomal protein S19"/>
    <property type="match status" value="1"/>
</dbReference>
<dbReference type="Gene3D" id="3.30.860.10">
    <property type="entry name" value="30s Ribosomal Protein S19, Chain A"/>
    <property type="match status" value="1"/>
</dbReference>
<dbReference type="HAMAP" id="MF_00531">
    <property type="entry name" value="Ribosomal_uS19"/>
    <property type="match status" value="1"/>
</dbReference>
<dbReference type="InterPro" id="IPR002222">
    <property type="entry name" value="Ribosomal_uS19"/>
</dbReference>
<dbReference type="InterPro" id="IPR005732">
    <property type="entry name" value="Ribosomal_uS19_bac-type"/>
</dbReference>
<dbReference type="InterPro" id="IPR020934">
    <property type="entry name" value="Ribosomal_uS19_CS"/>
</dbReference>
<dbReference type="InterPro" id="IPR023575">
    <property type="entry name" value="Ribosomal_uS19_SF"/>
</dbReference>
<dbReference type="NCBIfam" id="TIGR01050">
    <property type="entry name" value="rpsS_bact"/>
    <property type="match status" value="1"/>
</dbReference>
<dbReference type="PANTHER" id="PTHR11880">
    <property type="entry name" value="RIBOSOMAL PROTEIN S19P FAMILY MEMBER"/>
    <property type="match status" value="1"/>
</dbReference>
<dbReference type="PANTHER" id="PTHR11880:SF8">
    <property type="entry name" value="SMALL RIBOSOMAL SUBUNIT PROTEIN US19M"/>
    <property type="match status" value="1"/>
</dbReference>
<dbReference type="Pfam" id="PF00203">
    <property type="entry name" value="Ribosomal_S19"/>
    <property type="match status" value="1"/>
</dbReference>
<dbReference type="PIRSF" id="PIRSF002144">
    <property type="entry name" value="Ribosomal_S19"/>
    <property type="match status" value="1"/>
</dbReference>
<dbReference type="PRINTS" id="PR00975">
    <property type="entry name" value="RIBOSOMALS19"/>
</dbReference>
<dbReference type="SUPFAM" id="SSF54570">
    <property type="entry name" value="Ribosomal protein S19"/>
    <property type="match status" value="1"/>
</dbReference>
<dbReference type="PROSITE" id="PS00323">
    <property type="entry name" value="RIBOSOMAL_S19"/>
    <property type="match status" value="1"/>
</dbReference>
<comment type="function">
    <text evidence="1">Protein S19 forms a complex with S13 that binds strongly to the 16S ribosomal RNA.</text>
</comment>
<comment type="similarity">
    <text evidence="2">Belongs to the universal ribosomal protein uS19 family.</text>
</comment>
<evidence type="ECO:0000250" key="1"/>
<evidence type="ECO:0000305" key="2"/>
<reference key="1">
    <citation type="journal article" date="2002" name="J. Bacteriol.">
        <title>Whole-genome comparison of Mycobacterium tuberculosis clinical and laboratory strains.</title>
        <authorList>
            <person name="Fleischmann R.D."/>
            <person name="Alland D."/>
            <person name="Eisen J.A."/>
            <person name="Carpenter L."/>
            <person name="White O."/>
            <person name="Peterson J.D."/>
            <person name="DeBoy R.T."/>
            <person name="Dodson R.J."/>
            <person name="Gwinn M.L."/>
            <person name="Haft D.H."/>
            <person name="Hickey E.K."/>
            <person name="Kolonay J.F."/>
            <person name="Nelson W.C."/>
            <person name="Umayam L.A."/>
            <person name="Ermolaeva M.D."/>
            <person name="Salzberg S.L."/>
            <person name="Delcher A."/>
            <person name="Utterback T.R."/>
            <person name="Weidman J.F."/>
            <person name="Khouri H.M."/>
            <person name="Gill J."/>
            <person name="Mikula A."/>
            <person name="Bishai W."/>
            <person name="Jacobs W.R. Jr."/>
            <person name="Venter J.C."/>
            <person name="Fraser C.M."/>
        </authorList>
    </citation>
    <scope>NUCLEOTIDE SEQUENCE [LARGE SCALE GENOMIC DNA]</scope>
    <source>
        <strain>CDC 1551 / Oshkosh</strain>
    </source>
</reference>
<gene>
    <name type="primary">rpsS</name>
    <name type="ordered locus">MT0732</name>
</gene>
<sequence>MPRSLKKGPFVDEHLLKKVDVQNEKNTKQVIKTWSRRSTIIPDFIGHTFAVHDGRKHVPVFVTESMVGHKLGEFAPTRTFKGHIKDDRKSKRR</sequence>
<organism>
    <name type="scientific">Mycobacterium tuberculosis (strain CDC 1551 / Oshkosh)</name>
    <dbReference type="NCBI Taxonomy" id="83331"/>
    <lineage>
        <taxon>Bacteria</taxon>
        <taxon>Bacillati</taxon>
        <taxon>Actinomycetota</taxon>
        <taxon>Actinomycetes</taxon>
        <taxon>Mycobacteriales</taxon>
        <taxon>Mycobacteriaceae</taxon>
        <taxon>Mycobacterium</taxon>
        <taxon>Mycobacterium tuberculosis complex</taxon>
    </lineage>
</organism>
<feature type="chain" id="PRO_0000428251" description="Small ribosomal subunit protein uS19">
    <location>
        <begin position="1"/>
        <end position="93"/>
    </location>
</feature>
<proteinExistence type="inferred from homology"/>
<protein>
    <recommendedName>
        <fullName evidence="2">Small ribosomal subunit protein uS19</fullName>
    </recommendedName>
    <alternativeName>
        <fullName>30S ribosomal protein S19</fullName>
    </alternativeName>
</protein>
<name>RS19_MYCTO</name>
<accession>P9WH44</accession>
<accession>L0T687</accession>
<accession>O08118</accession>
<accession>P0A5X4</accession>
<accession>P48947</accession>
<accession>P95053</accession>
<keyword id="KW-1185">Reference proteome</keyword>
<keyword id="KW-0687">Ribonucleoprotein</keyword>
<keyword id="KW-0689">Ribosomal protein</keyword>
<keyword id="KW-0694">RNA-binding</keyword>
<keyword id="KW-0699">rRNA-binding</keyword>